<comment type="function">
    <text>May be required for efficient nitrogen fixation.</text>
</comment>
<comment type="developmental stage">
    <text>Expressed exclusively within vegetative cells.</text>
</comment>
<comment type="similarity">
    <text evidence="1">Belongs to the HesB/IscA family.</text>
</comment>
<gene>
    <name type="primary">hesB2</name>
    <name type="ordered locus">Ava_4257</name>
</gene>
<keyword id="KW-0535">Nitrogen fixation</keyword>
<sequence>MTLTLTEAAEFRLRTFLLSFSKDENSTQRGIRVAVEDGGCSGYQYSIKIINAPQADDMVLQQGKLRIYVDSQSAPLLEGVVVDFVDGLLESGFKFSNPNATDTCGCGKSFQAGNCSPAGVPCS</sequence>
<evidence type="ECO:0000305" key="1"/>
<proteinExistence type="evidence at transcript level"/>
<feature type="chain" id="PRO_0000076985" description="Protein HesB, vegetative">
    <location>
        <begin position="1"/>
        <end position="123"/>
    </location>
</feature>
<accession>P46052</accession>
<accession>Q3M580</accession>
<reference key="1">
    <citation type="journal article" date="1995" name="Mol. Microbiol.">
        <title>Distinct and differently regulated Mo-dependent nitrogen-fixing systems evolved for heterocysts and vegetative cells of Anabaena variabilis ATCC 29413: characterization of the fdxH1/2 gene regions as part of the nif1/2 gene clusters.</title>
        <authorList>
            <person name="Schrautemeier B."/>
            <person name="Neveling U."/>
            <person name="Schmitz S."/>
        </authorList>
    </citation>
    <scope>NUCLEOTIDE SEQUENCE [GENOMIC DNA]</scope>
</reference>
<reference key="2">
    <citation type="journal article" date="2014" name="Stand. Genomic Sci.">
        <title>Complete genome sequence of Anabaena variabilis ATCC 29413.</title>
        <authorList>
            <person name="Thiel T."/>
            <person name="Pratte B.S."/>
            <person name="Zhong J."/>
            <person name="Goodwin L."/>
            <person name="Copeland A."/>
            <person name="Lucas S."/>
            <person name="Han C."/>
            <person name="Pitluck S."/>
            <person name="Land M.L."/>
            <person name="Kyrpides N.C."/>
            <person name="Woyke T."/>
        </authorList>
    </citation>
    <scope>NUCLEOTIDE SEQUENCE [LARGE SCALE GENOMIC DNA]</scope>
    <source>
        <strain>ATCC 29413 / PCC 7937</strain>
    </source>
</reference>
<protein>
    <recommendedName>
        <fullName>Protein HesB, vegetative</fullName>
    </recommendedName>
</protein>
<dbReference type="EMBL" id="Z46890">
    <property type="protein sequence ID" value="CAA86990.1"/>
    <property type="molecule type" value="Genomic_DNA"/>
</dbReference>
<dbReference type="EMBL" id="CP000117">
    <property type="protein sequence ID" value="ABA23856.1"/>
    <property type="molecule type" value="Genomic_DNA"/>
</dbReference>
<dbReference type="PIR" id="S70248">
    <property type="entry name" value="S70248"/>
</dbReference>
<dbReference type="SMR" id="P46052"/>
<dbReference type="STRING" id="240292.Ava_4257"/>
<dbReference type="KEGG" id="ava:Ava_4257"/>
<dbReference type="eggNOG" id="COG0316">
    <property type="taxonomic scope" value="Bacteria"/>
</dbReference>
<dbReference type="HOGENOM" id="CLU_069054_5_1_3"/>
<dbReference type="Proteomes" id="UP000002533">
    <property type="component" value="Chromosome"/>
</dbReference>
<dbReference type="GO" id="GO:0051537">
    <property type="term" value="F:2 iron, 2 sulfur cluster binding"/>
    <property type="evidence" value="ECO:0007669"/>
    <property type="project" value="UniProtKB-ARBA"/>
</dbReference>
<dbReference type="GO" id="GO:0051539">
    <property type="term" value="F:4 iron, 4 sulfur cluster binding"/>
    <property type="evidence" value="ECO:0007669"/>
    <property type="project" value="TreeGrafter"/>
</dbReference>
<dbReference type="GO" id="GO:0005506">
    <property type="term" value="F:iron ion binding"/>
    <property type="evidence" value="ECO:0007669"/>
    <property type="project" value="TreeGrafter"/>
</dbReference>
<dbReference type="GO" id="GO:0016226">
    <property type="term" value="P:iron-sulfur cluster assembly"/>
    <property type="evidence" value="ECO:0007669"/>
    <property type="project" value="InterPro"/>
</dbReference>
<dbReference type="GO" id="GO:0009399">
    <property type="term" value="P:nitrogen fixation"/>
    <property type="evidence" value="ECO:0007669"/>
    <property type="project" value="UniProtKB-KW"/>
</dbReference>
<dbReference type="Gene3D" id="2.60.300.12">
    <property type="entry name" value="HesB-like domain"/>
    <property type="match status" value="1"/>
</dbReference>
<dbReference type="InterPro" id="IPR000361">
    <property type="entry name" value="FeS_biogenesis"/>
</dbReference>
<dbReference type="InterPro" id="IPR016092">
    <property type="entry name" value="FeS_cluster_insertion"/>
</dbReference>
<dbReference type="InterPro" id="IPR017870">
    <property type="entry name" value="FeS_cluster_insertion_CS"/>
</dbReference>
<dbReference type="InterPro" id="IPR035903">
    <property type="entry name" value="HesB-like_dom_sf"/>
</dbReference>
<dbReference type="NCBIfam" id="TIGR00049">
    <property type="entry name" value="iron-sulfur cluster assembly accessory protein"/>
    <property type="match status" value="1"/>
</dbReference>
<dbReference type="PANTHER" id="PTHR43011">
    <property type="entry name" value="IRON-SULFUR CLUSTER ASSEMBLY 2 HOMOLOG, MITOCHONDRIAL"/>
    <property type="match status" value="1"/>
</dbReference>
<dbReference type="PANTHER" id="PTHR43011:SF1">
    <property type="entry name" value="IRON-SULFUR CLUSTER ASSEMBLY 2 HOMOLOG, MITOCHONDRIAL"/>
    <property type="match status" value="1"/>
</dbReference>
<dbReference type="Pfam" id="PF01521">
    <property type="entry name" value="Fe-S_biosyn"/>
    <property type="match status" value="1"/>
</dbReference>
<dbReference type="SUPFAM" id="SSF89360">
    <property type="entry name" value="HesB-like domain"/>
    <property type="match status" value="1"/>
</dbReference>
<dbReference type="PROSITE" id="PS01152">
    <property type="entry name" value="HESB"/>
    <property type="match status" value="1"/>
</dbReference>
<organism>
    <name type="scientific">Trichormus variabilis (strain ATCC 29413 / PCC 7937)</name>
    <name type="common">Anabaena variabilis</name>
    <dbReference type="NCBI Taxonomy" id="240292"/>
    <lineage>
        <taxon>Bacteria</taxon>
        <taxon>Bacillati</taxon>
        <taxon>Cyanobacteriota</taxon>
        <taxon>Cyanophyceae</taxon>
        <taxon>Nostocales</taxon>
        <taxon>Nostocaceae</taxon>
        <taxon>Trichormus</taxon>
    </lineage>
</organism>
<name>HESB2_TRIV2</name>